<proteinExistence type="evidence at transcript level"/>
<keyword id="KW-1185">Reference proteome</keyword>
<keyword id="KW-0677">Repeat</keyword>
<gene>
    <name type="ordered locus">At1g11900</name>
    <name type="ORF">F12F1.26</name>
</gene>
<organism>
    <name type="scientific">Arabidopsis thaliana</name>
    <name type="common">Mouse-ear cress</name>
    <dbReference type="NCBI Taxonomy" id="3702"/>
    <lineage>
        <taxon>Eukaryota</taxon>
        <taxon>Viridiplantae</taxon>
        <taxon>Streptophyta</taxon>
        <taxon>Embryophyta</taxon>
        <taxon>Tracheophyta</taxon>
        <taxon>Spermatophyta</taxon>
        <taxon>Magnoliopsida</taxon>
        <taxon>eudicotyledons</taxon>
        <taxon>Gunneridae</taxon>
        <taxon>Pentapetalae</taxon>
        <taxon>rosids</taxon>
        <taxon>malvids</taxon>
        <taxon>Brassicales</taxon>
        <taxon>Brassicaceae</taxon>
        <taxon>Camelineae</taxon>
        <taxon>Arabidopsis</taxon>
    </lineage>
</organism>
<reference key="1">
    <citation type="journal article" date="2000" name="Nature">
        <title>Sequence and analysis of chromosome 1 of the plant Arabidopsis thaliana.</title>
        <authorList>
            <person name="Theologis A."/>
            <person name="Ecker J.R."/>
            <person name="Palm C.J."/>
            <person name="Federspiel N.A."/>
            <person name="Kaul S."/>
            <person name="White O."/>
            <person name="Alonso J."/>
            <person name="Altafi H."/>
            <person name="Araujo R."/>
            <person name="Bowman C.L."/>
            <person name="Brooks S.Y."/>
            <person name="Buehler E."/>
            <person name="Chan A."/>
            <person name="Chao Q."/>
            <person name="Chen H."/>
            <person name="Cheuk R.F."/>
            <person name="Chin C.W."/>
            <person name="Chung M.K."/>
            <person name="Conn L."/>
            <person name="Conway A.B."/>
            <person name="Conway A.R."/>
            <person name="Creasy T.H."/>
            <person name="Dewar K."/>
            <person name="Dunn P."/>
            <person name="Etgu P."/>
            <person name="Feldblyum T.V."/>
            <person name="Feng J.-D."/>
            <person name="Fong B."/>
            <person name="Fujii C.Y."/>
            <person name="Gill J.E."/>
            <person name="Goldsmith A.D."/>
            <person name="Haas B."/>
            <person name="Hansen N.F."/>
            <person name="Hughes B."/>
            <person name="Huizar L."/>
            <person name="Hunter J.L."/>
            <person name="Jenkins J."/>
            <person name="Johnson-Hopson C."/>
            <person name="Khan S."/>
            <person name="Khaykin E."/>
            <person name="Kim C.J."/>
            <person name="Koo H.L."/>
            <person name="Kremenetskaia I."/>
            <person name="Kurtz D.B."/>
            <person name="Kwan A."/>
            <person name="Lam B."/>
            <person name="Langin-Hooper S."/>
            <person name="Lee A."/>
            <person name="Lee J.M."/>
            <person name="Lenz C.A."/>
            <person name="Li J.H."/>
            <person name="Li Y.-P."/>
            <person name="Lin X."/>
            <person name="Liu S.X."/>
            <person name="Liu Z.A."/>
            <person name="Luros J.S."/>
            <person name="Maiti R."/>
            <person name="Marziali A."/>
            <person name="Militscher J."/>
            <person name="Miranda M."/>
            <person name="Nguyen M."/>
            <person name="Nierman W.C."/>
            <person name="Osborne B.I."/>
            <person name="Pai G."/>
            <person name="Peterson J."/>
            <person name="Pham P.K."/>
            <person name="Rizzo M."/>
            <person name="Rooney T."/>
            <person name="Rowley D."/>
            <person name="Sakano H."/>
            <person name="Salzberg S.L."/>
            <person name="Schwartz J.R."/>
            <person name="Shinn P."/>
            <person name="Southwick A.M."/>
            <person name="Sun H."/>
            <person name="Tallon L.J."/>
            <person name="Tambunga G."/>
            <person name="Toriumi M.J."/>
            <person name="Town C.D."/>
            <person name="Utterback T."/>
            <person name="Van Aken S."/>
            <person name="Vaysberg M."/>
            <person name="Vysotskaia V.S."/>
            <person name="Walker M."/>
            <person name="Wu D."/>
            <person name="Yu G."/>
            <person name="Fraser C.M."/>
            <person name="Venter J.C."/>
            <person name="Davis R.W."/>
        </authorList>
    </citation>
    <scope>NUCLEOTIDE SEQUENCE [LARGE SCALE GENOMIC DNA]</scope>
    <source>
        <strain>cv. Columbia</strain>
    </source>
</reference>
<reference key="2">
    <citation type="journal article" date="2017" name="Plant J.">
        <title>Araport11: a complete reannotation of the Arabidopsis thaliana reference genome.</title>
        <authorList>
            <person name="Cheng C.Y."/>
            <person name="Krishnakumar V."/>
            <person name="Chan A.P."/>
            <person name="Thibaud-Nissen F."/>
            <person name="Schobel S."/>
            <person name="Town C.D."/>
        </authorList>
    </citation>
    <scope>GENOME REANNOTATION</scope>
    <source>
        <strain>cv. Columbia</strain>
    </source>
</reference>
<reference key="3">
    <citation type="submission" date="2005-03" db="EMBL/GenBank/DDBJ databases">
        <title>Arabidopsis ORF clones.</title>
        <authorList>
            <person name="Kim C.J."/>
            <person name="Chen H."/>
            <person name="Cheuk R.F."/>
            <person name="Shinn P."/>
            <person name="Ecker J.R."/>
        </authorList>
    </citation>
    <scope>NUCLEOTIDE SEQUENCE [LARGE SCALE MRNA]</scope>
    <source>
        <strain>cv. Columbia</strain>
    </source>
</reference>
<reference key="4">
    <citation type="journal article" date="2004" name="Plant Cell">
        <title>Genome-wide analysis of Arabidopsis pentatricopeptide repeat proteins reveals their essential role in organelle biogenesis.</title>
        <authorList>
            <person name="Lurin C."/>
            <person name="Andres C."/>
            <person name="Aubourg S."/>
            <person name="Bellaoui M."/>
            <person name="Bitton F."/>
            <person name="Bruyere C."/>
            <person name="Caboche M."/>
            <person name="Debast C."/>
            <person name="Gualberto J."/>
            <person name="Hoffmann B."/>
            <person name="Lecharny A."/>
            <person name="Le Ret M."/>
            <person name="Martin-Magniette M.-L."/>
            <person name="Mireau H."/>
            <person name="Peeters N."/>
            <person name="Renou J.-P."/>
            <person name="Szurek B."/>
            <person name="Taconnat L."/>
            <person name="Small I."/>
        </authorList>
    </citation>
    <scope>GENE FAMILY</scope>
</reference>
<dbReference type="EMBL" id="AC002131">
    <property type="protein sequence ID" value="AAC17629.1"/>
    <property type="status" value="ALT_SEQ"/>
    <property type="molecule type" value="Genomic_DNA"/>
</dbReference>
<dbReference type="EMBL" id="CP002684">
    <property type="protein sequence ID" value="AEE28810.1"/>
    <property type="molecule type" value="Genomic_DNA"/>
</dbReference>
<dbReference type="EMBL" id="BT021121">
    <property type="protein sequence ID" value="AAX22256.1"/>
    <property type="molecule type" value="mRNA"/>
</dbReference>
<dbReference type="PIR" id="D86253">
    <property type="entry name" value="D86253"/>
</dbReference>
<dbReference type="RefSeq" id="NP_172654.2">
    <property type="nucleotide sequence ID" value="NM_101061.3"/>
</dbReference>
<dbReference type="SMR" id="Q5BIV3"/>
<dbReference type="FunCoup" id="Q5BIV3">
    <property type="interactions" value="2"/>
</dbReference>
<dbReference type="STRING" id="3702.Q5BIV3"/>
<dbReference type="PaxDb" id="3702-AT1G11900.1"/>
<dbReference type="ProteomicsDB" id="226215"/>
<dbReference type="EnsemblPlants" id="AT1G11900.1">
    <property type="protein sequence ID" value="AT1G11900.1"/>
    <property type="gene ID" value="AT1G11900"/>
</dbReference>
<dbReference type="GeneID" id="837738"/>
<dbReference type="Gramene" id="AT1G11900.1">
    <property type="protein sequence ID" value="AT1G11900.1"/>
    <property type="gene ID" value="AT1G11900"/>
</dbReference>
<dbReference type="KEGG" id="ath:AT1G11900"/>
<dbReference type="Araport" id="AT1G11900"/>
<dbReference type="TAIR" id="AT1G11900"/>
<dbReference type="eggNOG" id="KOG4197">
    <property type="taxonomic scope" value="Eukaryota"/>
</dbReference>
<dbReference type="HOGENOM" id="CLU_002706_10_0_1"/>
<dbReference type="InParanoid" id="Q5BIV3"/>
<dbReference type="OMA" id="CKIFARE"/>
<dbReference type="PhylomeDB" id="Q5BIV3"/>
<dbReference type="PRO" id="PR:Q5BIV3"/>
<dbReference type="Proteomes" id="UP000006548">
    <property type="component" value="Chromosome 1"/>
</dbReference>
<dbReference type="ExpressionAtlas" id="Q5BIV3">
    <property type="expression patterns" value="baseline and differential"/>
</dbReference>
<dbReference type="Gene3D" id="1.25.40.10">
    <property type="entry name" value="Tetratricopeptide repeat domain"/>
    <property type="match status" value="2"/>
</dbReference>
<dbReference type="InterPro" id="IPR002885">
    <property type="entry name" value="Pentatricopeptide_rpt"/>
</dbReference>
<dbReference type="InterPro" id="IPR011990">
    <property type="entry name" value="TPR-like_helical_dom_sf"/>
</dbReference>
<dbReference type="NCBIfam" id="TIGR00756">
    <property type="entry name" value="PPR"/>
    <property type="match status" value="4"/>
</dbReference>
<dbReference type="PANTHER" id="PTHR47447">
    <property type="entry name" value="OS03G0856100 PROTEIN"/>
    <property type="match status" value="1"/>
</dbReference>
<dbReference type="PANTHER" id="PTHR47447:SF17">
    <property type="entry name" value="OS12G0638900 PROTEIN"/>
    <property type="match status" value="1"/>
</dbReference>
<dbReference type="Pfam" id="PF01535">
    <property type="entry name" value="PPR"/>
    <property type="match status" value="2"/>
</dbReference>
<dbReference type="Pfam" id="PF13041">
    <property type="entry name" value="PPR_2"/>
    <property type="match status" value="2"/>
</dbReference>
<dbReference type="PROSITE" id="PS51375">
    <property type="entry name" value="PPR"/>
    <property type="match status" value="6"/>
</dbReference>
<evidence type="ECO:0000305" key="1"/>
<feature type="chain" id="PRO_0000342776" description="Pentatricopeptide repeat-containing protein At1g11900">
    <location>
        <begin position="1"/>
        <end position="367"/>
    </location>
</feature>
<feature type="repeat" description="PPR 1">
    <location>
        <begin position="69"/>
        <end position="103"/>
    </location>
</feature>
<feature type="repeat" description="PPR 2">
    <location>
        <begin position="104"/>
        <end position="139"/>
    </location>
</feature>
<feature type="repeat" description="PPR 3">
    <location>
        <begin position="141"/>
        <end position="175"/>
    </location>
</feature>
<feature type="repeat" description="PPR 4">
    <location>
        <begin position="176"/>
        <end position="210"/>
    </location>
</feature>
<feature type="repeat" description="PPR 5">
    <location>
        <begin position="211"/>
        <end position="241"/>
    </location>
</feature>
<feature type="repeat" description="PPR 6">
    <location>
        <begin position="247"/>
        <end position="281"/>
    </location>
</feature>
<feature type="repeat" description="PPR 7">
    <location>
        <begin position="282"/>
        <end position="316"/>
    </location>
</feature>
<feature type="repeat" description="PPR 8">
    <location>
        <begin position="317"/>
        <end position="347"/>
    </location>
</feature>
<name>PPR35_ARATH</name>
<sequence length="367" mass="41622">MMKWSIVKRIPVYGGSFISMKHMMLVPADLSWSCSFSGMHSLINTGEEDEEELLKKIVNHSESGSKIISKIDYTNLVEKFTRDGNLSGAYDLLQSLQEKNICLPISVFKNLLAAAGELNDMKLSCRVFREVLILPGKEPLSSDCYLNLARAFINTDDCTYLTSLLKEISESSLPYRLIVMNRIIFAFAETRQIDKVLMILKEMKEWECKPDVITYNSVLDILGRAGLVNEILGVLSTMKEDCSVSVNIITYNTVLNGMRKACRFDMCLVIYNEMVQCGIEPDLLSYTAVIDSLGRSGNVKESLRLFDEMKQRQIRPSVYVYRALIDCLKKSGDFQSALQLSDELKNTSSLDLAGPQDFKRHLRSHRR</sequence>
<accession>Q5BIV3</accession>
<accession>O65392</accession>
<protein>
    <recommendedName>
        <fullName>Pentatricopeptide repeat-containing protein At1g11900</fullName>
    </recommendedName>
</protein>
<comment type="similarity">
    <text evidence="1">Belongs to the PPR family. P subfamily.</text>
</comment>
<comment type="sequence caution" evidence="1">
    <conflict type="erroneous gene model prediction">
        <sequence resource="EMBL-CDS" id="AAC17629"/>
    </conflict>
</comment>
<comment type="online information" name="Pentatricopeptide repeat proteins">
    <link uri="https://ppr.plantenergy.uwa.edu.au"/>
</comment>